<name>RSGA_SYNY3</name>
<gene>
    <name evidence="1" type="primary">rsgA</name>
    <name type="synonym">engC</name>
    <name type="ordered locus">sll0898</name>
</gene>
<dbReference type="EC" id="3.6.1.-" evidence="1"/>
<dbReference type="EMBL" id="BA000022">
    <property type="protein sequence ID" value="BAA10858.1"/>
    <property type="molecule type" value="Genomic_DNA"/>
</dbReference>
<dbReference type="PIR" id="S76011">
    <property type="entry name" value="S76011"/>
</dbReference>
<dbReference type="SMR" id="P52640"/>
<dbReference type="FunCoup" id="P52640">
    <property type="interactions" value="290"/>
</dbReference>
<dbReference type="IntAct" id="P52640">
    <property type="interactions" value="8"/>
</dbReference>
<dbReference type="STRING" id="1148.gene:10500364"/>
<dbReference type="PaxDb" id="1148-1001369"/>
<dbReference type="EnsemblBacteria" id="BAA10858">
    <property type="protein sequence ID" value="BAA10858"/>
    <property type="gene ID" value="BAA10858"/>
</dbReference>
<dbReference type="KEGG" id="syn:sll0898"/>
<dbReference type="eggNOG" id="COG1162">
    <property type="taxonomic scope" value="Bacteria"/>
</dbReference>
<dbReference type="InParanoid" id="P52640"/>
<dbReference type="PhylomeDB" id="P52640"/>
<dbReference type="Proteomes" id="UP000001425">
    <property type="component" value="Chromosome"/>
</dbReference>
<dbReference type="GO" id="GO:0005737">
    <property type="term" value="C:cytoplasm"/>
    <property type="evidence" value="ECO:0007669"/>
    <property type="project" value="UniProtKB-SubCell"/>
</dbReference>
<dbReference type="GO" id="GO:0005525">
    <property type="term" value="F:GTP binding"/>
    <property type="evidence" value="ECO:0007669"/>
    <property type="project" value="UniProtKB-UniRule"/>
</dbReference>
<dbReference type="GO" id="GO:0003924">
    <property type="term" value="F:GTPase activity"/>
    <property type="evidence" value="ECO:0007669"/>
    <property type="project" value="UniProtKB-UniRule"/>
</dbReference>
<dbReference type="GO" id="GO:0046872">
    <property type="term" value="F:metal ion binding"/>
    <property type="evidence" value="ECO:0007669"/>
    <property type="project" value="UniProtKB-KW"/>
</dbReference>
<dbReference type="GO" id="GO:0019843">
    <property type="term" value="F:rRNA binding"/>
    <property type="evidence" value="ECO:0007669"/>
    <property type="project" value="UniProtKB-KW"/>
</dbReference>
<dbReference type="GO" id="GO:0042274">
    <property type="term" value="P:ribosomal small subunit biogenesis"/>
    <property type="evidence" value="ECO:0007669"/>
    <property type="project" value="UniProtKB-UniRule"/>
</dbReference>
<dbReference type="CDD" id="cd01854">
    <property type="entry name" value="YjeQ_EngC"/>
    <property type="match status" value="1"/>
</dbReference>
<dbReference type="Gene3D" id="2.40.50.140">
    <property type="entry name" value="Nucleic acid-binding proteins"/>
    <property type="match status" value="1"/>
</dbReference>
<dbReference type="Gene3D" id="3.40.50.300">
    <property type="entry name" value="P-loop containing nucleotide triphosphate hydrolases"/>
    <property type="match status" value="1"/>
</dbReference>
<dbReference type="Gene3D" id="1.10.40.50">
    <property type="entry name" value="Probable gtpase engc, domain 3"/>
    <property type="match status" value="1"/>
</dbReference>
<dbReference type="HAMAP" id="MF_01820">
    <property type="entry name" value="GTPase_RsgA"/>
    <property type="match status" value="1"/>
</dbReference>
<dbReference type="InterPro" id="IPR030378">
    <property type="entry name" value="G_CP_dom"/>
</dbReference>
<dbReference type="InterPro" id="IPR012340">
    <property type="entry name" value="NA-bd_OB-fold"/>
</dbReference>
<dbReference type="InterPro" id="IPR027417">
    <property type="entry name" value="P-loop_NTPase"/>
</dbReference>
<dbReference type="InterPro" id="IPR004881">
    <property type="entry name" value="Ribosome_biogen_GTPase_RsgA"/>
</dbReference>
<dbReference type="InterPro" id="IPR010914">
    <property type="entry name" value="RsgA_GTPase_dom"/>
</dbReference>
<dbReference type="NCBIfam" id="NF008932">
    <property type="entry name" value="PRK12289.1"/>
    <property type="match status" value="1"/>
</dbReference>
<dbReference type="NCBIfam" id="TIGR00157">
    <property type="entry name" value="ribosome small subunit-dependent GTPase A"/>
    <property type="match status" value="1"/>
</dbReference>
<dbReference type="PANTHER" id="PTHR32120">
    <property type="entry name" value="SMALL RIBOSOMAL SUBUNIT BIOGENESIS GTPASE RSGA"/>
    <property type="match status" value="1"/>
</dbReference>
<dbReference type="PANTHER" id="PTHR32120:SF11">
    <property type="entry name" value="SMALL RIBOSOMAL SUBUNIT BIOGENESIS GTPASE RSGA 1, MITOCHONDRIAL-RELATED"/>
    <property type="match status" value="1"/>
</dbReference>
<dbReference type="Pfam" id="PF03193">
    <property type="entry name" value="RsgA_GTPase"/>
    <property type="match status" value="1"/>
</dbReference>
<dbReference type="SUPFAM" id="SSF50249">
    <property type="entry name" value="Nucleic acid-binding proteins"/>
    <property type="match status" value="1"/>
</dbReference>
<dbReference type="SUPFAM" id="SSF52540">
    <property type="entry name" value="P-loop containing nucleoside triphosphate hydrolases"/>
    <property type="match status" value="1"/>
</dbReference>
<dbReference type="PROSITE" id="PS50936">
    <property type="entry name" value="ENGC_GTPASE"/>
    <property type="match status" value="1"/>
</dbReference>
<dbReference type="PROSITE" id="PS51721">
    <property type="entry name" value="G_CP"/>
    <property type="match status" value="1"/>
</dbReference>
<comment type="function">
    <text evidence="1">One of several proteins that assist in the late maturation steps of the functional core of the 30S ribosomal subunit. Helps release RbfA from mature subunits. May play a role in the assembly of ribosomal proteins into the subunit. Circularly permuted GTPase that catalyzes slow GTP hydrolysis, GTPase activity is stimulated by the 30S ribosomal subunit.</text>
</comment>
<comment type="cofactor">
    <cofactor evidence="1">
        <name>Zn(2+)</name>
        <dbReference type="ChEBI" id="CHEBI:29105"/>
    </cofactor>
    <text evidence="1">Binds 1 zinc ion per subunit.</text>
</comment>
<comment type="subunit">
    <text evidence="1">Monomer. Associates with 30S ribosomal subunit, binds 16S rRNA.</text>
</comment>
<comment type="subcellular location">
    <subcellularLocation>
        <location evidence="1">Cytoplasm</location>
    </subcellularLocation>
</comment>
<comment type="similarity">
    <text evidence="1">Belongs to the TRAFAC class YlqF/YawG GTPase family. RsgA subfamily.</text>
</comment>
<reference key="1">
    <citation type="journal article" date="1995" name="DNA Res.">
        <title>Sequence analysis of the genome of the unicellular cyanobacterium Synechocystis sp. strain PCC6803. I. Sequence features in the 1 Mb region from map positions 64% to 92% of the genome.</title>
        <authorList>
            <person name="Kaneko T."/>
            <person name="Tanaka A."/>
            <person name="Sato S."/>
            <person name="Kotani H."/>
            <person name="Sazuka T."/>
            <person name="Miyajima N."/>
            <person name="Sugiura M."/>
            <person name="Tabata S."/>
        </authorList>
    </citation>
    <scope>NUCLEOTIDE SEQUENCE [LARGE SCALE GENOMIC DNA]</scope>
    <source>
        <strain>ATCC 27184 / PCC 6803 / N-1</strain>
    </source>
</reference>
<reference key="2">
    <citation type="journal article" date="1996" name="DNA Res.">
        <title>Sequence analysis of the genome of the unicellular cyanobacterium Synechocystis sp. strain PCC6803. II. Sequence determination of the entire genome and assignment of potential protein-coding regions.</title>
        <authorList>
            <person name="Kaneko T."/>
            <person name="Sato S."/>
            <person name="Kotani H."/>
            <person name="Tanaka A."/>
            <person name="Asamizu E."/>
            <person name="Nakamura Y."/>
            <person name="Miyajima N."/>
            <person name="Hirosawa M."/>
            <person name="Sugiura M."/>
            <person name="Sasamoto S."/>
            <person name="Kimura T."/>
            <person name="Hosouchi T."/>
            <person name="Matsuno A."/>
            <person name="Muraki A."/>
            <person name="Nakazaki N."/>
            <person name="Naruo K."/>
            <person name="Okumura S."/>
            <person name="Shimpo S."/>
            <person name="Takeuchi C."/>
            <person name="Wada T."/>
            <person name="Watanabe A."/>
            <person name="Yamada M."/>
            <person name="Yasuda M."/>
            <person name="Tabata S."/>
        </authorList>
    </citation>
    <scope>NUCLEOTIDE SEQUENCE [LARGE SCALE GENOMIC DNA]</scope>
    <source>
        <strain>ATCC 27184 / PCC 6803 / Kazusa</strain>
    </source>
</reference>
<organism>
    <name type="scientific">Synechocystis sp. (strain ATCC 27184 / PCC 6803 / Kazusa)</name>
    <dbReference type="NCBI Taxonomy" id="1111708"/>
    <lineage>
        <taxon>Bacteria</taxon>
        <taxon>Bacillati</taxon>
        <taxon>Cyanobacteriota</taxon>
        <taxon>Cyanophyceae</taxon>
        <taxon>Synechococcales</taxon>
        <taxon>Merismopediaceae</taxon>
        <taxon>Synechocystis</taxon>
    </lineage>
</organism>
<keyword id="KW-0963">Cytoplasm</keyword>
<keyword id="KW-0342">GTP-binding</keyword>
<keyword id="KW-0378">Hydrolase</keyword>
<keyword id="KW-0479">Metal-binding</keyword>
<keyword id="KW-0547">Nucleotide-binding</keyword>
<keyword id="KW-1185">Reference proteome</keyword>
<keyword id="KW-0690">Ribosome biogenesis</keyword>
<keyword id="KW-0694">RNA-binding</keyword>
<keyword id="KW-0699">rRNA-binding</keyword>
<keyword id="KW-0862">Zinc</keyword>
<proteinExistence type="inferred from homology"/>
<feature type="chain" id="PRO_0000171535" description="Small ribosomal subunit biogenesis GTPase RsgA">
    <location>
        <begin position="1"/>
        <end position="369"/>
    </location>
</feature>
<feature type="domain" description="CP-type G" evidence="2">
    <location>
        <begin position="88"/>
        <end position="246"/>
    </location>
</feature>
<feature type="region of interest" description="Disordered" evidence="3">
    <location>
        <begin position="307"/>
        <end position="369"/>
    </location>
</feature>
<feature type="compositionally biased region" description="Acidic residues" evidence="3">
    <location>
        <begin position="359"/>
        <end position="369"/>
    </location>
</feature>
<feature type="binding site" evidence="1">
    <location>
        <begin position="137"/>
        <end position="140"/>
    </location>
    <ligand>
        <name>GTP</name>
        <dbReference type="ChEBI" id="CHEBI:37565"/>
    </ligand>
</feature>
<feature type="binding site" evidence="1">
    <location>
        <begin position="188"/>
        <end position="196"/>
    </location>
    <ligand>
        <name>GTP</name>
        <dbReference type="ChEBI" id="CHEBI:37565"/>
    </ligand>
</feature>
<feature type="binding site" evidence="1">
    <location>
        <position position="271"/>
    </location>
    <ligand>
        <name>Zn(2+)</name>
        <dbReference type="ChEBI" id="CHEBI:29105"/>
    </ligand>
</feature>
<feature type="binding site" evidence="1">
    <location>
        <position position="276"/>
    </location>
    <ligand>
        <name>Zn(2+)</name>
        <dbReference type="ChEBI" id="CHEBI:29105"/>
    </ligand>
</feature>
<feature type="binding site" evidence="1">
    <location>
        <position position="278"/>
    </location>
    <ligand>
        <name>Zn(2+)</name>
        <dbReference type="ChEBI" id="CHEBI:29105"/>
    </ligand>
</feature>
<feature type="binding site" evidence="1">
    <location>
        <position position="284"/>
    </location>
    <ligand>
        <name>Zn(2+)</name>
        <dbReference type="ChEBI" id="CHEBI:29105"/>
    </ligand>
</feature>
<accession>P52640</accession>
<protein>
    <recommendedName>
        <fullName evidence="1">Small ribosomal subunit biogenesis GTPase RsgA</fullName>
        <ecNumber evidence="1">3.6.1.-</ecNumber>
    </recommendedName>
</protein>
<evidence type="ECO:0000255" key="1">
    <source>
        <dbReference type="HAMAP-Rule" id="MF_01820"/>
    </source>
</evidence>
<evidence type="ECO:0000255" key="2">
    <source>
        <dbReference type="PROSITE-ProRule" id="PRU01058"/>
    </source>
</evidence>
<evidence type="ECO:0000256" key="3">
    <source>
        <dbReference type="SAM" id="MobiDB-lite"/>
    </source>
</evidence>
<sequence length="369" mass="41891">MTKATDEGTVIAVQANYYWVRLRNVTSQPLLCTRRTRLKKVGQKVMVGDQVRVELPPSLLLHGRSNTAPVPMVAEGDLGAIAKVYPRRTVLERPPVANAEQICLVFALTDPPLEEWQLSRFLVQAEATGLEISLCFNKQDLVQETDVKFWGDRLAAWGYAPIIISVENRWGVEKLQEKLRSRISLMAGPSGVGKSSLINLLVPGVEQQVKNVSGKLRKGRHTTRHVELFDLPHGGLLADTPGFNQPDLAVEPAQLIHLFPEARQQLTGQECFFKDCLHRGEPDCAVGQDWERYEHYLTFLEEVLAQQNPENSRETDTGLKTKTGSDGQEYDEPKLETKKYRRHSRRQEHQELQSFCEQTDLDNLQEDWE</sequence>